<reference key="1">
    <citation type="journal article" date="2008" name="DNA Res.">
        <title>Complete genome sequence and comparative analysis of the wild-type commensal Escherichia coli strain SE11 isolated from a healthy adult.</title>
        <authorList>
            <person name="Oshima K."/>
            <person name="Toh H."/>
            <person name="Ogura Y."/>
            <person name="Sasamoto H."/>
            <person name="Morita H."/>
            <person name="Park S.-H."/>
            <person name="Ooka T."/>
            <person name="Iyoda S."/>
            <person name="Taylor T.D."/>
            <person name="Hayashi T."/>
            <person name="Itoh K."/>
            <person name="Hattori M."/>
        </authorList>
    </citation>
    <scope>NUCLEOTIDE SEQUENCE [LARGE SCALE GENOMIC DNA]</scope>
    <source>
        <strain>SE11</strain>
    </source>
</reference>
<feature type="chain" id="PRO_1000186193" description="Purine nucleoside phosphorylase DeoD-type">
    <location>
        <begin position="1"/>
        <end position="239"/>
    </location>
</feature>
<feature type="active site" description="Proton donor" evidence="2">
    <location>
        <position position="205"/>
    </location>
</feature>
<feature type="binding site" evidence="1">
    <location>
        <position position="5"/>
    </location>
    <ligand>
        <name>a purine D-ribonucleoside</name>
        <dbReference type="ChEBI" id="CHEBI:142355"/>
        <note>ligand shared between dimeric partners</note>
    </ligand>
</feature>
<feature type="binding site" description="in other chain" evidence="1">
    <location>
        <position position="21"/>
    </location>
    <ligand>
        <name>phosphate</name>
        <dbReference type="ChEBI" id="CHEBI:43474"/>
        <note>ligand shared between dimeric partners</note>
    </ligand>
</feature>
<feature type="binding site" description="in other chain" evidence="1">
    <location>
        <position position="25"/>
    </location>
    <ligand>
        <name>phosphate</name>
        <dbReference type="ChEBI" id="CHEBI:43474"/>
        <note>ligand shared between dimeric partners</note>
    </ligand>
</feature>
<feature type="binding site" evidence="1">
    <location>
        <position position="44"/>
    </location>
    <ligand>
        <name>phosphate</name>
        <dbReference type="ChEBI" id="CHEBI:43474"/>
        <note>ligand shared between dimeric partners</note>
    </ligand>
</feature>
<feature type="binding site" description="in other chain" evidence="1">
    <location>
        <begin position="88"/>
        <end position="91"/>
    </location>
    <ligand>
        <name>phosphate</name>
        <dbReference type="ChEBI" id="CHEBI:43474"/>
        <note>ligand shared between dimeric partners</note>
    </ligand>
</feature>
<feature type="binding site" description="in other chain" evidence="1">
    <location>
        <begin position="180"/>
        <end position="182"/>
    </location>
    <ligand>
        <name>a purine D-ribonucleoside</name>
        <dbReference type="ChEBI" id="CHEBI:142355"/>
        <note>ligand shared between dimeric partners</note>
    </ligand>
</feature>
<feature type="binding site" description="in other chain" evidence="1">
    <location>
        <begin position="204"/>
        <end position="205"/>
    </location>
    <ligand>
        <name>a purine D-ribonucleoside</name>
        <dbReference type="ChEBI" id="CHEBI:142355"/>
        <note>ligand shared between dimeric partners</note>
    </ligand>
</feature>
<feature type="site" description="Important for catalytic activity" evidence="2">
    <location>
        <position position="218"/>
    </location>
</feature>
<feature type="modified residue" description="N6-acetyllysine" evidence="2">
    <location>
        <position position="27"/>
    </location>
</feature>
<keyword id="KW-0007">Acetylation</keyword>
<keyword id="KW-0328">Glycosyltransferase</keyword>
<keyword id="KW-0808">Transferase</keyword>
<sequence>MATPHINAEMGDFADVVLMPGDPLRAKYIAETFLEDAREVNNVRGMLGFTGTYKGRKISVMGHGMGIPSCSIYTKELITDFGVKKIIRVGSCGAVLPHVKLRDVVIGMGACTDSKVNRIRFKDHDFAAIADFDMVRNAVDAAKALGIDARVGNLFSADLFYSPDGEMFDVMEKYGILGVEMEAAGIYGVAAEFGAKALTICTVSDHIRTHEQTTAAERQTTFNDMIKIALESVLLGDKE</sequence>
<comment type="function">
    <text evidence="2">Catalyzes the reversible phosphorolytic breakdown of the N-glycosidic bond in the beta-(deoxy)ribonucleoside molecules, with the formation of the corresponding free purine bases and pentose-1-phosphate.</text>
</comment>
<comment type="catalytic activity">
    <reaction evidence="2">
        <text>a purine D-ribonucleoside + phosphate = a purine nucleobase + alpha-D-ribose 1-phosphate</text>
        <dbReference type="Rhea" id="RHEA:19805"/>
        <dbReference type="ChEBI" id="CHEBI:26386"/>
        <dbReference type="ChEBI" id="CHEBI:43474"/>
        <dbReference type="ChEBI" id="CHEBI:57720"/>
        <dbReference type="ChEBI" id="CHEBI:142355"/>
        <dbReference type="EC" id="2.4.2.1"/>
    </reaction>
</comment>
<comment type="catalytic activity">
    <reaction evidence="2">
        <text>a purine 2'-deoxy-D-ribonucleoside + phosphate = a purine nucleobase + 2-deoxy-alpha-D-ribose 1-phosphate</text>
        <dbReference type="Rhea" id="RHEA:36431"/>
        <dbReference type="ChEBI" id="CHEBI:26386"/>
        <dbReference type="ChEBI" id="CHEBI:43474"/>
        <dbReference type="ChEBI" id="CHEBI:57259"/>
        <dbReference type="ChEBI" id="CHEBI:142361"/>
        <dbReference type="EC" id="2.4.2.1"/>
    </reaction>
</comment>
<comment type="subunit">
    <text evidence="2">Homohexamer; trimer of homodimers.</text>
</comment>
<comment type="similarity">
    <text evidence="2">Belongs to the PNP/UDP phosphorylase family.</text>
</comment>
<evidence type="ECO:0000250" key="1">
    <source>
        <dbReference type="UniProtKB" id="P50389"/>
    </source>
</evidence>
<evidence type="ECO:0000255" key="2">
    <source>
        <dbReference type="HAMAP-Rule" id="MF_01627"/>
    </source>
</evidence>
<dbReference type="EC" id="2.4.2.1" evidence="2"/>
<dbReference type="EMBL" id="AP009240">
    <property type="protein sequence ID" value="BAG80183.1"/>
    <property type="molecule type" value="Genomic_DNA"/>
</dbReference>
<dbReference type="RefSeq" id="WP_000224877.1">
    <property type="nucleotide sequence ID" value="NC_011415.1"/>
</dbReference>
<dbReference type="SMR" id="B6I6N1"/>
<dbReference type="GeneID" id="93777460"/>
<dbReference type="KEGG" id="ecy:ECSE_4659"/>
<dbReference type="HOGENOM" id="CLU_068457_2_0_6"/>
<dbReference type="Proteomes" id="UP000008199">
    <property type="component" value="Chromosome"/>
</dbReference>
<dbReference type="GO" id="GO:0005829">
    <property type="term" value="C:cytosol"/>
    <property type="evidence" value="ECO:0007669"/>
    <property type="project" value="TreeGrafter"/>
</dbReference>
<dbReference type="GO" id="GO:0004731">
    <property type="term" value="F:purine-nucleoside phosphorylase activity"/>
    <property type="evidence" value="ECO:0007669"/>
    <property type="project" value="UniProtKB-UniRule"/>
</dbReference>
<dbReference type="GO" id="GO:0006152">
    <property type="term" value="P:purine nucleoside catabolic process"/>
    <property type="evidence" value="ECO:0007669"/>
    <property type="project" value="TreeGrafter"/>
</dbReference>
<dbReference type="CDD" id="cd09006">
    <property type="entry name" value="PNP_EcPNPI-like"/>
    <property type="match status" value="1"/>
</dbReference>
<dbReference type="FunFam" id="3.40.50.1580:FF:000002">
    <property type="entry name" value="Purine nucleoside phosphorylase DeoD-type"/>
    <property type="match status" value="1"/>
</dbReference>
<dbReference type="Gene3D" id="3.40.50.1580">
    <property type="entry name" value="Nucleoside phosphorylase domain"/>
    <property type="match status" value="1"/>
</dbReference>
<dbReference type="HAMAP" id="MF_01627">
    <property type="entry name" value="Pur_nucleosid_phosp"/>
    <property type="match status" value="1"/>
</dbReference>
<dbReference type="InterPro" id="IPR004402">
    <property type="entry name" value="DeoD-type"/>
</dbReference>
<dbReference type="InterPro" id="IPR018016">
    <property type="entry name" value="Nucleoside_phosphorylase_CS"/>
</dbReference>
<dbReference type="InterPro" id="IPR000845">
    <property type="entry name" value="Nucleoside_phosphorylase_d"/>
</dbReference>
<dbReference type="InterPro" id="IPR035994">
    <property type="entry name" value="Nucleoside_phosphorylase_sf"/>
</dbReference>
<dbReference type="NCBIfam" id="TIGR00107">
    <property type="entry name" value="deoD"/>
    <property type="match status" value="1"/>
</dbReference>
<dbReference type="NCBIfam" id="NF004489">
    <property type="entry name" value="PRK05819.1"/>
    <property type="match status" value="1"/>
</dbReference>
<dbReference type="NCBIfam" id="NF009914">
    <property type="entry name" value="PRK13374.1"/>
    <property type="match status" value="1"/>
</dbReference>
<dbReference type="PANTHER" id="PTHR43691:SF2">
    <property type="entry name" value="PURINE NUCLEOSIDE PHOSPHORYLASE DEOD-TYPE"/>
    <property type="match status" value="1"/>
</dbReference>
<dbReference type="PANTHER" id="PTHR43691">
    <property type="entry name" value="URIDINE PHOSPHORYLASE"/>
    <property type="match status" value="1"/>
</dbReference>
<dbReference type="Pfam" id="PF01048">
    <property type="entry name" value="PNP_UDP_1"/>
    <property type="match status" value="1"/>
</dbReference>
<dbReference type="SUPFAM" id="SSF53167">
    <property type="entry name" value="Purine and uridine phosphorylases"/>
    <property type="match status" value="1"/>
</dbReference>
<dbReference type="PROSITE" id="PS01232">
    <property type="entry name" value="PNP_UDP_1"/>
    <property type="match status" value="1"/>
</dbReference>
<gene>
    <name evidence="2" type="primary">deoD</name>
    <name type="ordered locus">ECSE_4659</name>
</gene>
<accession>B6I6N1</accession>
<organism>
    <name type="scientific">Escherichia coli (strain SE11)</name>
    <dbReference type="NCBI Taxonomy" id="409438"/>
    <lineage>
        <taxon>Bacteria</taxon>
        <taxon>Pseudomonadati</taxon>
        <taxon>Pseudomonadota</taxon>
        <taxon>Gammaproteobacteria</taxon>
        <taxon>Enterobacterales</taxon>
        <taxon>Enterobacteriaceae</taxon>
        <taxon>Escherichia</taxon>
    </lineage>
</organism>
<name>DEOD_ECOSE</name>
<protein>
    <recommendedName>
        <fullName evidence="2">Purine nucleoside phosphorylase DeoD-type</fullName>
        <shortName evidence="2">PNP</shortName>
        <ecNumber evidence="2">2.4.2.1</ecNumber>
    </recommendedName>
</protein>
<proteinExistence type="inferred from homology"/>